<organism>
    <name type="scientific">Mus musculus</name>
    <name type="common">Mouse</name>
    <dbReference type="NCBI Taxonomy" id="10090"/>
    <lineage>
        <taxon>Eukaryota</taxon>
        <taxon>Metazoa</taxon>
        <taxon>Chordata</taxon>
        <taxon>Craniata</taxon>
        <taxon>Vertebrata</taxon>
        <taxon>Euteleostomi</taxon>
        <taxon>Mammalia</taxon>
        <taxon>Eutheria</taxon>
        <taxon>Euarchontoglires</taxon>
        <taxon>Glires</taxon>
        <taxon>Rodentia</taxon>
        <taxon>Myomorpha</taxon>
        <taxon>Muroidea</taxon>
        <taxon>Muridae</taxon>
        <taxon>Murinae</taxon>
        <taxon>Mus</taxon>
        <taxon>Mus</taxon>
    </lineage>
</organism>
<name>POPD3_MOUSE</name>
<evidence type="ECO:0000250" key="1">
    <source>
        <dbReference type="UniProtKB" id="Q9HBV1"/>
    </source>
</evidence>
<evidence type="ECO:0000255" key="2"/>
<evidence type="ECO:0000269" key="3">
    <source>
    </source>
</evidence>
<evidence type="ECO:0000269" key="4">
    <source>
    </source>
</evidence>
<evidence type="ECO:0000305" key="5"/>
<reference key="1">
    <citation type="journal article" date="2000" name="Dev. Biol.">
        <title>Isolation and characterization of the novel popeye gene family expressed in skeletal muscle and heart.</title>
        <authorList>
            <person name="Andree B."/>
            <person name="Hillemann T."/>
            <person name="Kessler-Icekson G."/>
            <person name="Schmitt-John T."/>
            <person name="Jockusch H."/>
            <person name="Arnold H.-H."/>
            <person name="Brand T."/>
        </authorList>
    </citation>
    <scope>NUCLEOTIDE SEQUENCE [MRNA]</scope>
    <scope>POSSIBLE FUNCTION</scope>
    <scope>TISSUE SPECIFICITY</scope>
</reference>
<reference key="2">
    <citation type="journal article" date="2005" name="Science">
        <title>The transcriptional landscape of the mammalian genome.</title>
        <authorList>
            <person name="Carninci P."/>
            <person name="Kasukawa T."/>
            <person name="Katayama S."/>
            <person name="Gough J."/>
            <person name="Frith M.C."/>
            <person name="Maeda N."/>
            <person name="Oyama R."/>
            <person name="Ravasi T."/>
            <person name="Lenhard B."/>
            <person name="Wells C."/>
            <person name="Kodzius R."/>
            <person name="Shimokawa K."/>
            <person name="Bajic V.B."/>
            <person name="Brenner S.E."/>
            <person name="Batalov S."/>
            <person name="Forrest A.R."/>
            <person name="Zavolan M."/>
            <person name="Davis M.J."/>
            <person name="Wilming L.G."/>
            <person name="Aidinis V."/>
            <person name="Allen J.E."/>
            <person name="Ambesi-Impiombato A."/>
            <person name="Apweiler R."/>
            <person name="Aturaliya R.N."/>
            <person name="Bailey T.L."/>
            <person name="Bansal M."/>
            <person name="Baxter L."/>
            <person name="Beisel K.W."/>
            <person name="Bersano T."/>
            <person name="Bono H."/>
            <person name="Chalk A.M."/>
            <person name="Chiu K.P."/>
            <person name="Choudhary V."/>
            <person name="Christoffels A."/>
            <person name="Clutterbuck D.R."/>
            <person name="Crowe M.L."/>
            <person name="Dalla E."/>
            <person name="Dalrymple B.P."/>
            <person name="de Bono B."/>
            <person name="Della Gatta G."/>
            <person name="di Bernardo D."/>
            <person name="Down T."/>
            <person name="Engstrom P."/>
            <person name="Fagiolini M."/>
            <person name="Faulkner G."/>
            <person name="Fletcher C.F."/>
            <person name="Fukushima T."/>
            <person name="Furuno M."/>
            <person name="Futaki S."/>
            <person name="Gariboldi M."/>
            <person name="Georgii-Hemming P."/>
            <person name="Gingeras T.R."/>
            <person name="Gojobori T."/>
            <person name="Green R.E."/>
            <person name="Gustincich S."/>
            <person name="Harbers M."/>
            <person name="Hayashi Y."/>
            <person name="Hensch T.K."/>
            <person name="Hirokawa N."/>
            <person name="Hill D."/>
            <person name="Huminiecki L."/>
            <person name="Iacono M."/>
            <person name="Ikeo K."/>
            <person name="Iwama A."/>
            <person name="Ishikawa T."/>
            <person name="Jakt M."/>
            <person name="Kanapin A."/>
            <person name="Katoh M."/>
            <person name="Kawasawa Y."/>
            <person name="Kelso J."/>
            <person name="Kitamura H."/>
            <person name="Kitano H."/>
            <person name="Kollias G."/>
            <person name="Krishnan S.P."/>
            <person name="Kruger A."/>
            <person name="Kummerfeld S.K."/>
            <person name="Kurochkin I.V."/>
            <person name="Lareau L.F."/>
            <person name="Lazarevic D."/>
            <person name="Lipovich L."/>
            <person name="Liu J."/>
            <person name="Liuni S."/>
            <person name="McWilliam S."/>
            <person name="Madan Babu M."/>
            <person name="Madera M."/>
            <person name="Marchionni L."/>
            <person name="Matsuda H."/>
            <person name="Matsuzawa S."/>
            <person name="Miki H."/>
            <person name="Mignone F."/>
            <person name="Miyake S."/>
            <person name="Morris K."/>
            <person name="Mottagui-Tabar S."/>
            <person name="Mulder N."/>
            <person name="Nakano N."/>
            <person name="Nakauchi H."/>
            <person name="Ng P."/>
            <person name="Nilsson R."/>
            <person name="Nishiguchi S."/>
            <person name="Nishikawa S."/>
            <person name="Nori F."/>
            <person name="Ohara O."/>
            <person name="Okazaki Y."/>
            <person name="Orlando V."/>
            <person name="Pang K.C."/>
            <person name="Pavan W.J."/>
            <person name="Pavesi G."/>
            <person name="Pesole G."/>
            <person name="Petrovsky N."/>
            <person name="Piazza S."/>
            <person name="Reed J."/>
            <person name="Reid J.F."/>
            <person name="Ring B.Z."/>
            <person name="Ringwald M."/>
            <person name="Rost B."/>
            <person name="Ruan Y."/>
            <person name="Salzberg S.L."/>
            <person name="Sandelin A."/>
            <person name="Schneider C."/>
            <person name="Schoenbach C."/>
            <person name="Sekiguchi K."/>
            <person name="Semple C.A."/>
            <person name="Seno S."/>
            <person name="Sessa L."/>
            <person name="Sheng Y."/>
            <person name="Shibata Y."/>
            <person name="Shimada H."/>
            <person name="Shimada K."/>
            <person name="Silva D."/>
            <person name="Sinclair B."/>
            <person name="Sperling S."/>
            <person name="Stupka E."/>
            <person name="Sugiura K."/>
            <person name="Sultana R."/>
            <person name="Takenaka Y."/>
            <person name="Taki K."/>
            <person name="Tammoja K."/>
            <person name="Tan S.L."/>
            <person name="Tang S."/>
            <person name="Taylor M.S."/>
            <person name="Tegner J."/>
            <person name="Teichmann S.A."/>
            <person name="Ueda H.R."/>
            <person name="van Nimwegen E."/>
            <person name="Verardo R."/>
            <person name="Wei C.L."/>
            <person name="Yagi K."/>
            <person name="Yamanishi H."/>
            <person name="Zabarovsky E."/>
            <person name="Zhu S."/>
            <person name="Zimmer A."/>
            <person name="Hide W."/>
            <person name="Bult C."/>
            <person name="Grimmond S.M."/>
            <person name="Teasdale R.D."/>
            <person name="Liu E.T."/>
            <person name="Brusic V."/>
            <person name="Quackenbush J."/>
            <person name="Wahlestedt C."/>
            <person name="Mattick J.S."/>
            <person name="Hume D.A."/>
            <person name="Kai C."/>
            <person name="Sasaki D."/>
            <person name="Tomaru Y."/>
            <person name="Fukuda S."/>
            <person name="Kanamori-Katayama M."/>
            <person name="Suzuki M."/>
            <person name="Aoki J."/>
            <person name="Arakawa T."/>
            <person name="Iida J."/>
            <person name="Imamura K."/>
            <person name="Itoh M."/>
            <person name="Kato T."/>
            <person name="Kawaji H."/>
            <person name="Kawagashira N."/>
            <person name="Kawashima T."/>
            <person name="Kojima M."/>
            <person name="Kondo S."/>
            <person name="Konno H."/>
            <person name="Nakano K."/>
            <person name="Ninomiya N."/>
            <person name="Nishio T."/>
            <person name="Okada M."/>
            <person name="Plessy C."/>
            <person name="Shibata K."/>
            <person name="Shiraki T."/>
            <person name="Suzuki S."/>
            <person name="Tagami M."/>
            <person name="Waki K."/>
            <person name="Watahiki A."/>
            <person name="Okamura-Oho Y."/>
            <person name="Suzuki H."/>
            <person name="Kawai J."/>
            <person name="Hayashizaki Y."/>
        </authorList>
    </citation>
    <scope>NUCLEOTIDE SEQUENCE [LARGE SCALE MRNA]</scope>
    <source>
        <strain>C57BL/6J</strain>
        <tissue>Heart</tissue>
    </source>
</reference>
<reference key="3">
    <citation type="journal article" date="2004" name="Genome Res.">
        <title>The status, quality, and expansion of the NIH full-length cDNA project: the Mammalian Gene Collection (MGC).</title>
        <authorList>
            <consortium name="The MGC Project Team"/>
        </authorList>
    </citation>
    <scope>NUCLEOTIDE SEQUENCE [LARGE SCALE MRNA]</scope>
</reference>
<reference key="4">
    <citation type="journal article" date="2012" name="J. Clin. Invest.">
        <title>Popeye domain containing proteins are essential for stress-mediated modulation of cardiac pacemaking in mice.</title>
        <authorList>
            <person name="Froese A."/>
            <person name="Breher S.S."/>
            <person name="Waldeyer C."/>
            <person name="Schindler R.F."/>
            <person name="Nikolaev V.O."/>
            <person name="Rinne S."/>
            <person name="Wischmeyer E."/>
            <person name="Schlueter J."/>
            <person name="Becher J."/>
            <person name="Simrick S."/>
            <person name="Vauti F."/>
            <person name="Kuhtz J."/>
            <person name="Meister P."/>
            <person name="Kreissl S."/>
            <person name="Torlopp A."/>
            <person name="Liebig S.K."/>
            <person name="Laakmann S."/>
            <person name="Mueller T.D."/>
            <person name="Neumann J."/>
            <person name="Stieber J."/>
            <person name="Ludwig A."/>
            <person name="Maier S.K."/>
            <person name="Decher N."/>
            <person name="Arnold H.H."/>
            <person name="Kirchhof P."/>
            <person name="Fabritz L."/>
            <person name="Brand T."/>
        </authorList>
    </citation>
    <scope>FUNCTION</scope>
    <scope>CAMP-BINDING</scope>
</reference>
<sequence>MEKNSSLWKSLVTEHPLCTTWKQEAEGAIYHLASILFVVGFMGGSGFFGLLYVFSLLGLGFLSSAVWAWVDICAADIFSWNFVLFVICFMQFVHIAYQVHSITFARDFHVLYSSLFKPLGIPLPVFRTIALSSEVVSLEKEHCYAMQGKTSIDRLSVLISGRIRVTVDGEFLHYISPFQFLDSPEWDSLRPTEEGIFQVTLTADTDCRYVSWRRKKLYLLFAQHRYISRLFSVLIGSDIADKLYALNDRVYIGKKHHYDIRLPNYYHMSTPDLSRSPLTEQFRNSRQHCNK</sequence>
<accession>Q9ES81</accession>
<accession>Q1RME0</accession>
<dbReference type="EMBL" id="AF204176">
    <property type="protein sequence ID" value="AAG23409.1"/>
    <property type="molecule type" value="mRNA"/>
</dbReference>
<dbReference type="EMBL" id="AK052325">
    <property type="protein sequence ID" value="BAC34938.1"/>
    <property type="molecule type" value="mRNA"/>
</dbReference>
<dbReference type="EMBL" id="BC114993">
    <property type="protein sequence ID" value="AAI14994.1"/>
    <property type="molecule type" value="mRNA"/>
</dbReference>
<dbReference type="CCDS" id="CCDS23827.1"/>
<dbReference type="RefSeq" id="NP_077248.1">
    <property type="nucleotide sequence ID" value="NM_024286.1"/>
</dbReference>
<dbReference type="RefSeq" id="XP_036012007.1">
    <property type="nucleotide sequence ID" value="XM_036156114.1"/>
</dbReference>
<dbReference type="SMR" id="Q9ES81"/>
<dbReference type="FunCoup" id="Q9ES81">
    <property type="interactions" value="628"/>
</dbReference>
<dbReference type="STRING" id="10090.ENSMUSP00000019994"/>
<dbReference type="GlyCosmos" id="Q9ES81">
    <property type="glycosylation" value="1 site, No reported glycans"/>
</dbReference>
<dbReference type="GlyGen" id="Q9ES81">
    <property type="glycosylation" value="1 site"/>
</dbReference>
<dbReference type="iPTMnet" id="Q9ES81"/>
<dbReference type="PhosphoSitePlus" id="Q9ES81"/>
<dbReference type="PaxDb" id="10090-ENSMUSP00000019994"/>
<dbReference type="ProteomicsDB" id="289719"/>
<dbReference type="Antibodypedia" id="32110">
    <property type="antibodies" value="130 antibodies from 22 providers"/>
</dbReference>
<dbReference type="DNASU" id="78977"/>
<dbReference type="Ensembl" id="ENSMUST00000019994.14">
    <property type="protein sequence ID" value="ENSMUSP00000019994.8"/>
    <property type="gene ID" value="ENSMUSG00000019848.15"/>
</dbReference>
<dbReference type="GeneID" id="78977"/>
<dbReference type="KEGG" id="mmu:78977"/>
<dbReference type="UCSC" id="uc007ezy.1">
    <property type="organism name" value="mouse"/>
</dbReference>
<dbReference type="AGR" id="MGI:1930153"/>
<dbReference type="CTD" id="64208"/>
<dbReference type="MGI" id="MGI:1930153">
    <property type="gene designation" value="Popdc3"/>
</dbReference>
<dbReference type="VEuPathDB" id="HostDB:ENSMUSG00000019848"/>
<dbReference type="eggNOG" id="ENOG502QWBZ">
    <property type="taxonomic scope" value="Eukaryota"/>
</dbReference>
<dbReference type="GeneTree" id="ENSGT00390000002563"/>
<dbReference type="HOGENOM" id="CLU_048494_2_1_1"/>
<dbReference type="InParanoid" id="Q9ES81"/>
<dbReference type="OMA" id="TSWKQEA"/>
<dbReference type="OrthoDB" id="425611at2759"/>
<dbReference type="PhylomeDB" id="Q9ES81"/>
<dbReference type="TreeFam" id="TF326644"/>
<dbReference type="BioGRID-ORCS" id="78977">
    <property type="hits" value="1 hit in 80 CRISPR screens"/>
</dbReference>
<dbReference type="PRO" id="PR:Q9ES81"/>
<dbReference type="Proteomes" id="UP000000589">
    <property type="component" value="Chromosome 10"/>
</dbReference>
<dbReference type="RNAct" id="Q9ES81">
    <property type="molecule type" value="protein"/>
</dbReference>
<dbReference type="Bgee" id="ENSMUSG00000019848">
    <property type="expression patterns" value="Expressed in triceps brachii and 120 other cell types or tissues"/>
</dbReference>
<dbReference type="ExpressionAtlas" id="Q9ES81">
    <property type="expression patterns" value="baseline and differential"/>
</dbReference>
<dbReference type="GO" id="GO:0016020">
    <property type="term" value="C:membrane"/>
    <property type="evidence" value="ECO:0000314"/>
    <property type="project" value="MGI"/>
</dbReference>
<dbReference type="GO" id="GO:0030552">
    <property type="term" value="F:cAMP binding"/>
    <property type="evidence" value="ECO:0000314"/>
    <property type="project" value="UniProtKB"/>
</dbReference>
<dbReference type="GO" id="GO:0042391">
    <property type="term" value="P:regulation of membrane potential"/>
    <property type="evidence" value="ECO:0000316"/>
    <property type="project" value="MGI"/>
</dbReference>
<dbReference type="InterPro" id="IPR018490">
    <property type="entry name" value="cNMP-bd_dom_sf"/>
</dbReference>
<dbReference type="InterPro" id="IPR006916">
    <property type="entry name" value="POPDC1-3"/>
</dbReference>
<dbReference type="InterPro" id="IPR055272">
    <property type="entry name" value="POPDC1-3_dom"/>
</dbReference>
<dbReference type="PANTHER" id="PTHR12101">
    <property type="entry name" value="POPEYE DOMAIN CONTAINING PROTEIN"/>
    <property type="match status" value="1"/>
</dbReference>
<dbReference type="PANTHER" id="PTHR12101:SF18">
    <property type="entry name" value="POPEYE DOMAIN-CONTAINING PROTEIN 3"/>
    <property type="match status" value="1"/>
</dbReference>
<dbReference type="Pfam" id="PF04831">
    <property type="entry name" value="POPDC1-3"/>
    <property type="match status" value="1"/>
</dbReference>
<dbReference type="SUPFAM" id="SSF51206">
    <property type="entry name" value="cAMP-binding domain-like"/>
    <property type="match status" value="1"/>
</dbReference>
<keyword id="KW-0114">cAMP</keyword>
<keyword id="KW-0116">cAMP-binding</keyword>
<keyword id="KW-0325">Glycoprotein</keyword>
<keyword id="KW-0472">Membrane</keyword>
<keyword id="KW-0547">Nucleotide-binding</keyword>
<keyword id="KW-1185">Reference proteome</keyword>
<keyword id="KW-0812">Transmembrane</keyword>
<keyword id="KW-1133">Transmembrane helix</keyword>
<comment type="function">
    <text evidence="1 3 4">May play a role in the maintenance of heart function mediated, at least in part, through cAMP-binding. May play a role in the regulation of KCNK2-mediated current amplitude (By similarity).</text>
</comment>
<comment type="subcellular location">
    <subcellularLocation>
        <location evidence="5">Membrane</location>
        <topology evidence="5">Multi-pass membrane protein</topology>
    </subcellularLocation>
</comment>
<comment type="tissue specificity">
    <text evidence="3">Expressed in cardiac and skeletal muscle.</text>
</comment>
<comment type="similarity">
    <text evidence="5">Belongs to the popeye family.</text>
</comment>
<gene>
    <name type="primary">Popdc3</name>
    <name type="synonym">Pop3</name>
</gene>
<feature type="chain" id="PRO_0000046796" description="Popeye domain-containing protein 3">
    <location>
        <begin position="1"/>
        <end position="291"/>
    </location>
</feature>
<feature type="transmembrane region" description="Helical" evidence="2">
    <location>
        <begin position="27"/>
        <end position="44"/>
    </location>
</feature>
<feature type="transmembrane region" description="Helical" evidence="2">
    <location>
        <begin position="48"/>
        <end position="70"/>
    </location>
</feature>
<feature type="transmembrane region" description="Helical" evidence="2">
    <location>
        <begin position="77"/>
        <end position="99"/>
    </location>
</feature>
<feature type="glycosylation site" description="N-linked (GlcNAc...) asparagine" evidence="2">
    <location>
        <position position="4"/>
    </location>
</feature>
<protein>
    <recommendedName>
        <fullName>Popeye domain-containing protein 3</fullName>
        <shortName>Popeye protein 3</shortName>
    </recommendedName>
</protein>
<proteinExistence type="evidence at protein level"/>